<comment type="function">
    <text evidence="1">Neuropeptide stimulator of juvenile hormone synthesis.</text>
</comment>
<comment type="subcellular location">
    <subcellularLocation>
        <location evidence="5">Secreted</location>
    </subcellularLocation>
</comment>
<comment type="tissue specificity">
    <text evidence="3">Allatotropin: Expressed in corpora cardiaca (CC), corpora allata (CA), antennal lobe (AL) and gnathal ganglion (GNG) (protein level). Expression in AL detected in all animals, expression in GNG detected in most animals and expression in CA and CC detected in few animals (at protein level). Allatotropin-PP-1: Expressed in corpora cardiaca (CC), corpora allata (CA), antennal lobe (AL) and gnathal ganglion (GNG) (at protein level). Expression in AL detected in all animals and expression in GNG, CA and CC detected in some animals (at protein level).</text>
</comment>
<comment type="mass spectrometry">
    <molecule>Allatotropin</molecule>
    <text>Allatotropin-PP-1.</text>
</comment>
<comment type="mass spectrometry">
    <molecule>Allatotropin-PP-1</molecule>
    <text>Allatotropin.</text>
</comment>
<feature type="signal peptide" evidence="2">
    <location>
        <begin position="1"/>
        <end position="22"/>
    </location>
</feature>
<feature type="peptide" id="PRO_0000444171" description="Allatotropin-PP-1" evidence="3">
    <location>
        <begin position="23"/>
        <end position="37"/>
    </location>
</feature>
<feature type="peptide" id="PRO_0000444172" description="Allatotropin" evidence="3">
    <location>
        <begin position="39"/>
        <end position="51"/>
    </location>
</feature>
<feature type="propeptide" id="PRO_0000444173" evidence="5">
    <location>
        <begin position="55"/>
        <end position="135"/>
    </location>
</feature>
<feature type="modified residue" description="Phenylalanine amide" evidence="3">
    <location>
        <position position="51"/>
    </location>
</feature>
<reference evidence="5" key="1">
    <citation type="journal article" date="2018" name="J. Proteome Res.">
        <title>Mating-induced differential peptidomics of neuropeptides and protein hormones in Agrotis ipsilon moths.</title>
        <authorList>
            <person name="Diesner M."/>
            <person name="Gallot A."/>
            <person name="Binz H."/>
            <person name="Gaertner C."/>
            <person name="Vitecek S."/>
            <person name="Kahnt J."/>
            <person name="Schachtner J."/>
            <person name="Jacquin-Joly E."/>
            <person name="Gadenne C."/>
        </authorList>
    </citation>
    <scope>NUCLEOTIDE SEQUENCE [MRNA]</scope>
    <scope>PROTEIN SEQUENCE OF 23-37 AND 39-51</scope>
    <scope>TISSUE SPECIFICITY</scope>
    <scope>MASS SPECTROMETRY</scope>
    <scope>IDENTIFICATION BY MASS SPECTROMETRY</scope>
    <scope>AMIDATION AT PHE-51</scope>
</reference>
<name>ALLT_AGRIP</name>
<protein>
    <recommendedName>
        <fullName evidence="5">Allatotropins</fullName>
    </recommendedName>
    <component>
        <recommendedName>
            <fullName evidence="4">Allatotropin-PP-1</fullName>
            <shortName evidence="4">AT-PP-1</shortName>
        </recommendedName>
    </component>
    <component>
        <recommendedName>
            <fullName evidence="4">Allatotropin</fullName>
            <shortName evidence="4">AT</shortName>
        </recommendedName>
    </component>
</protein>
<evidence type="ECO:0000250" key="1">
    <source>
        <dbReference type="UniProtKB" id="P21786"/>
    </source>
</evidence>
<evidence type="ECO:0000255" key="2"/>
<evidence type="ECO:0000269" key="3">
    <source>
    </source>
</evidence>
<evidence type="ECO:0000303" key="4">
    <source>
    </source>
</evidence>
<evidence type="ECO:0000305" key="5"/>
<keyword id="KW-0027">Amidation</keyword>
<keyword id="KW-0165">Cleavage on pair of basic residues</keyword>
<keyword id="KW-0903">Direct protein sequencing</keyword>
<keyword id="KW-0527">Neuropeptide</keyword>
<keyword id="KW-0964">Secreted</keyword>
<keyword id="KW-0732">Signal</keyword>
<organism>
    <name type="scientific">Agrotis ipsilon</name>
    <name type="common">Black cutworm moth</name>
    <dbReference type="NCBI Taxonomy" id="56364"/>
    <lineage>
        <taxon>Eukaryota</taxon>
        <taxon>Metazoa</taxon>
        <taxon>Ecdysozoa</taxon>
        <taxon>Arthropoda</taxon>
        <taxon>Hexapoda</taxon>
        <taxon>Insecta</taxon>
        <taxon>Pterygota</taxon>
        <taxon>Neoptera</taxon>
        <taxon>Endopterygota</taxon>
        <taxon>Lepidoptera</taxon>
        <taxon>Glossata</taxon>
        <taxon>Ditrysia</taxon>
        <taxon>Noctuoidea</taxon>
        <taxon>Noctuidae</taxon>
        <taxon>Noctuinae</taxon>
        <taxon>Noctuini</taxon>
        <taxon>Agrotis</taxon>
    </lineage>
</organism>
<proteinExistence type="evidence at protein level"/>
<accession>C0HKS1</accession>
<accession>C0HKS2</accession>
<sequence>MNFSMHLVLAVAAAACLCVVTAAPEGRLTRTKQQRPTRGFKNVEMMTARGFGKRDRPHTRAELYGLDNFWEMLEAAPEREGQESTDEKTLESIPLDWFVNEMLNNPDFARSVVRKFIDLNQDGMLSSEELLRNVA</sequence>
<dbReference type="SMR" id="C0HKS1"/>
<dbReference type="GO" id="GO:0005576">
    <property type="term" value="C:extracellular region"/>
    <property type="evidence" value="ECO:0007669"/>
    <property type="project" value="UniProtKB-SubCell"/>
</dbReference>
<dbReference type="GO" id="GO:0007218">
    <property type="term" value="P:neuropeptide signaling pathway"/>
    <property type="evidence" value="ECO:0007669"/>
    <property type="project" value="UniProtKB-KW"/>
</dbReference>
<dbReference type="InterPro" id="IPR018247">
    <property type="entry name" value="EF_Hand_1_Ca_BS"/>
</dbReference>